<comment type="function">
    <text evidence="1">Catalyzes the radical-mediated insertion of two sulfur atoms into the C-6 and C-8 positions of the octanoyl moiety bound to the lipoyl domains of lipoate-dependent enzymes, thereby converting the octanoylated domains into lipoylated derivatives.</text>
</comment>
<comment type="catalytic activity">
    <reaction evidence="1">
        <text>[[Fe-S] cluster scaffold protein carrying a second [4Fe-4S](2+) cluster] + N(6)-octanoyl-L-lysyl-[protein] + 2 oxidized [2Fe-2S]-[ferredoxin] + 2 S-adenosyl-L-methionine + 4 H(+) = [[Fe-S] cluster scaffold protein] + N(6)-[(R)-dihydrolipoyl]-L-lysyl-[protein] + 4 Fe(3+) + 2 hydrogen sulfide + 2 5'-deoxyadenosine + 2 L-methionine + 2 reduced [2Fe-2S]-[ferredoxin]</text>
        <dbReference type="Rhea" id="RHEA:16585"/>
        <dbReference type="Rhea" id="RHEA-COMP:9928"/>
        <dbReference type="Rhea" id="RHEA-COMP:10000"/>
        <dbReference type="Rhea" id="RHEA-COMP:10001"/>
        <dbReference type="Rhea" id="RHEA-COMP:10475"/>
        <dbReference type="Rhea" id="RHEA-COMP:14568"/>
        <dbReference type="Rhea" id="RHEA-COMP:14569"/>
        <dbReference type="ChEBI" id="CHEBI:15378"/>
        <dbReference type="ChEBI" id="CHEBI:17319"/>
        <dbReference type="ChEBI" id="CHEBI:29034"/>
        <dbReference type="ChEBI" id="CHEBI:29919"/>
        <dbReference type="ChEBI" id="CHEBI:33722"/>
        <dbReference type="ChEBI" id="CHEBI:33737"/>
        <dbReference type="ChEBI" id="CHEBI:33738"/>
        <dbReference type="ChEBI" id="CHEBI:57844"/>
        <dbReference type="ChEBI" id="CHEBI:59789"/>
        <dbReference type="ChEBI" id="CHEBI:78809"/>
        <dbReference type="ChEBI" id="CHEBI:83100"/>
        <dbReference type="EC" id="2.8.1.8"/>
    </reaction>
</comment>
<comment type="cofactor">
    <cofactor evidence="1">
        <name>[4Fe-4S] cluster</name>
        <dbReference type="ChEBI" id="CHEBI:49883"/>
    </cofactor>
    <text evidence="1">Binds 2 [4Fe-4S] clusters per subunit. One cluster is coordinated with 3 cysteines and an exchangeable S-adenosyl-L-methionine.</text>
</comment>
<comment type="pathway">
    <text evidence="1">Protein modification; protein lipoylation via endogenous pathway; protein N(6)-(lipoyl)lysine from octanoyl-[acyl-carrier-protein]: step 2/2.</text>
</comment>
<comment type="subcellular location">
    <subcellularLocation>
        <location evidence="1">Cytoplasm</location>
    </subcellularLocation>
</comment>
<comment type="similarity">
    <text evidence="1">Belongs to the radical SAM superfamily. Lipoyl synthase family.</text>
</comment>
<reference key="1">
    <citation type="journal article" date="2009" name="Appl. Environ. Microbiol.">
        <title>Novel features of the polysaccharide-digesting gliding bacterium Flavobacterium johnsoniae as revealed by genome sequence analysis.</title>
        <authorList>
            <person name="McBride M.J."/>
            <person name="Xie G."/>
            <person name="Martens E.C."/>
            <person name="Lapidus A."/>
            <person name="Henrissat B."/>
            <person name="Rhodes R.G."/>
            <person name="Goltsman E."/>
            <person name="Wang W."/>
            <person name="Xu J."/>
            <person name="Hunnicutt D.W."/>
            <person name="Staroscik A.M."/>
            <person name="Hoover T.R."/>
            <person name="Cheng Y.Q."/>
            <person name="Stein J.L."/>
        </authorList>
    </citation>
    <scope>NUCLEOTIDE SEQUENCE [LARGE SCALE GENOMIC DNA]</scope>
    <source>
        <strain>ATCC 17061 / DSM 2064 / JCM 8514 / BCRC 14874 / CCUG 350202 / NBRC 14942 / NCIMB 11054 / UW101</strain>
    </source>
</reference>
<dbReference type="EC" id="2.8.1.8" evidence="1"/>
<dbReference type="EMBL" id="CP000685">
    <property type="protein sequence ID" value="ABQ03264.1"/>
    <property type="molecule type" value="Genomic_DNA"/>
</dbReference>
<dbReference type="RefSeq" id="WP_012022335.1">
    <property type="nucleotide sequence ID" value="NZ_MUGZ01000005.1"/>
</dbReference>
<dbReference type="SMR" id="A5FNF9"/>
<dbReference type="STRING" id="376686.Fjoh_0227"/>
<dbReference type="KEGG" id="fjo:Fjoh_0227"/>
<dbReference type="eggNOG" id="COG0320">
    <property type="taxonomic scope" value="Bacteria"/>
</dbReference>
<dbReference type="HOGENOM" id="CLU_033144_2_1_10"/>
<dbReference type="OrthoDB" id="9787898at2"/>
<dbReference type="UniPathway" id="UPA00538">
    <property type="reaction ID" value="UER00593"/>
</dbReference>
<dbReference type="Proteomes" id="UP000006694">
    <property type="component" value="Chromosome"/>
</dbReference>
<dbReference type="GO" id="GO:0005737">
    <property type="term" value="C:cytoplasm"/>
    <property type="evidence" value="ECO:0007669"/>
    <property type="project" value="UniProtKB-SubCell"/>
</dbReference>
<dbReference type="GO" id="GO:0051539">
    <property type="term" value="F:4 iron, 4 sulfur cluster binding"/>
    <property type="evidence" value="ECO:0007669"/>
    <property type="project" value="UniProtKB-UniRule"/>
</dbReference>
<dbReference type="GO" id="GO:0016992">
    <property type="term" value="F:lipoate synthase activity"/>
    <property type="evidence" value="ECO:0007669"/>
    <property type="project" value="UniProtKB-UniRule"/>
</dbReference>
<dbReference type="GO" id="GO:0046872">
    <property type="term" value="F:metal ion binding"/>
    <property type="evidence" value="ECO:0007669"/>
    <property type="project" value="UniProtKB-KW"/>
</dbReference>
<dbReference type="CDD" id="cd01335">
    <property type="entry name" value="Radical_SAM"/>
    <property type="match status" value="1"/>
</dbReference>
<dbReference type="FunFam" id="3.20.20.70:FF:000040">
    <property type="entry name" value="Lipoyl synthase"/>
    <property type="match status" value="1"/>
</dbReference>
<dbReference type="Gene3D" id="3.20.20.70">
    <property type="entry name" value="Aldolase class I"/>
    <property type="match status" value="1"/>
</dbReference>
<dbReference type="HAMAP" id="MF_00206">
    <property type="entry name" value="Lipoyl_synth"/>
    <property type="match status" value="1"/>
</dbReference>
<dbReference type="InterPro" id="IPR013785">
    <property type="entry name" value="Aldolase_TIM"/>
</dbReference>
<dbReference type="InterPro" id="IPR006638">
    <property type="entry name" value="Elp3/MiaA/NifB-like_rSAM"/>
</dbReference>
<dbReference type="InterPro" id="IPR003698">
    <property type="entry name" value="Lipoyl_synth"/>
</dbReference>
<dbReference type="InterPro" id="IPR007197">
    <property type="entry name" value="rSAM"/>
</dbReference>
<dbReference type="NCBIfam" id="TIGR00510">
    <property type="entry name" value="lipA"/>
    <property type="match status" value="1"/>
</dbReference>
<dbReference type="NCBIfam" id="NF004019">
    <property type="entry name" value="PRK05481.1"/>
    <property type="match status" value="1"/>
</dbReference>
<dbReference type="NCBIfam" id="NF009544">
    <property type="entry name" value="PRK12928.1"/>
    <property type="match status" value="1"/>
</dbReference>
<dbReference type="PANTHER" id="PTHR10949">
    <property type="entry name" value="LIPOYL SYNTHASE"/>
    <property type="match status" value="1"/>
</dbReference>
<dbReference type="PANTHER" id="PTHR10949:SF0">
    <property type="entry name" value="LIPOYL SYNTHASE, MITOCHONDRIAL"/>
    <property type="match status" value="1"/>
</dbReference>
<dbReference type="Pfam" id="PF04055">
    <property type="entry name" value="Radical_SAM"/>
    <property type="match status" value="1"/>
</dbReference>
<dbReference type="PIRSF" id="PIRSF005963">
    <property type="entry name" value="Lipoyl_synth"/>
    <property type="match status" value="1"/>
</dbReference>
<dbReference type="SFLD" id="SFLDF00271">
    <property type="entry name" value="lipoyl_synthase"/>
    <property type="match status" value="1"/>
</dbReference>
<dbReference type="SFLD" id="SFLDG01058">
    <property type="entry name" value="lipoyl_synthase_like"/>
    <property type="match status" value="1"/>
</dbReference>
<dbReference type="SMART" id="SM00729">
    <property type="entry name" value="Elp3"/>
    <property type="match status" value="1"/>
</dbReference>
<dbReference type="SUPFAM" id="SSF102114">
    <property type="entry name" value="Radical SAM enzymes"/>
    <property type="match status" value="1"/>
</dbReference>
<dbReference type="PROSITE" id="PS51918">
    <property type="entry name" value="RADICAL_SAM"/>
    <property type="match status" value="1"/>
</dbReference>
<proteinExistence type="inferred from homology"/>
<feature type="chain" id="PRO_1000077956" description="Lipoyl synthase">
    <location>
        <begin position="1"/>
        <end position="288"/>
    </location>
</feature>
<feature type="domain" description="Radical SAM core" evidence="2">
    <location>
        <begin position="54"/>
        <end position="269"/>
    </location>
</feature>
<feature type="binding site" evidence="1">
    <location>
        <position position="42"/>
    </location>
    <ligand>
        <name>[4Fe-4S] cluster</name>
        <dbReference type="ChEBI" id="CHEBI:49883"/>
        <label>1</label>
    </ligand>
</feature>
<feature type="binding site" evidence="1">
    <location>
        <position position="47"/>
    </location>
    <ligand>
        <name>[4Fe-4S] cluster</name>
        <dbReference type="ChEBI" id="CHEBI:49883"/>
        <label>1</label>
    </ligand>
</feature>
<feature type="binding site" evidence="1">
    <location>
        <position position="53"/>
    </location>
    <ligand>
        <name>[4Fe-4S] cluster</name>
        <dbReference type="ChEBI" id="CHEBI:49883"/>
        <label>1</label>
    </ligand>
</feature>
<feature type="binding site" evidence="1">
    <location>
        <position position="68"/>
    </location>
    <ligand>
        <name>[4Fe-4S] cluster</name>
        <dbReference type="ChEBI" id="CHEBI:49883"/>
        <label>2</label>
        <note>4Fe-4S-S-AdoMet</note>
    </ligand>
</feature>
<feature type="binding site" evidence="1">
    <location>
        <position position="72"/>
    </location>
    <ligand>
        <name>[4Fe-4S] cluster</name>
        <dbReference type="ChEBI" id="CHEBI:49883"/>
        <label>2</label>
        <note>4Fe-4S-S-AdoMet</note>
    </ligand>
</feature>
<feature type="binding site" evidence="1">
    <location>
        <position position="75"/>
    </location>
    <ligand>
        <name>[4Fe-4S] cluster</name>
        <dbReference type="ChEBI" id="CHEBI:49883"/>
        <label>2</label>
        <note>4Fe-4S-S-AdoMet</note>
    </ligand>
</feature>
<feature type="binding site" evidence="1">
    <location>
        <position position="280"/>
    </location>
    <ligand>
        <name>[4Fe-4S] cluster</name>
        <dbReference type="ChEBI" id="CHEBI:49883"/>
        <label>1</label>
    </ligand>
</feature>
<protein>
    <recommendedName>
        <fullName evidence="1">Lipoyl synthase</fullName>
        <ecNumber evidence="1">2.8.1.8</ecNumber>
    </recommendedName>
    <alternativeName>
        <fullName evidence="1">Lip-syn</fullName>
        <shortName evidence="1">LS</shortName>
    </alternativeName>
    <alternativeName>
        <fullName evidence="1">Lipoate synthase</fullName>
    </alternativeName>
    <alternativeName>
        <fullName evidence="1">Lipoic acid synthase</fullName>
    </alternativeName>
    <alternativeName>
        <fullName evidence="1">Sulfur insertion protein LipA</fullName>
    </alternativeName>
</protein>
<accession>A5FNF9</accession>
<evidence type="ECO:0000255" key="1">
    <source>
        <dbReference type="HAMAP-Rule" id="MF_00206"/>
    </source>
</evidence>
<evidence type="ECO:0000255" key="2">
    <source>
        <dbReference type="PROSITE-ProRule" id="PRU01266"/>
    </source>
</evidence>
<gene>
    <name evidence="1" type="primary">lipA</name>
    <name type="ordered locus">Fjoh_0227</name>
</gene>
<sequence>METVIENIPPAKPKWLKVKLPIGQKYTELRGLVDKYSLNTICTSGSCPNMGECWGEGTATFMILGNVCTRSCGFCGVKTGRPETVDWDEPEKVARSIKIMNIKHAVITSVDRDDLKDGGSIIWMETVRAIRRMNPNTTLETLIPDFQGIERNIDRIVEANPEVVSHNMETVRRLTREVRIQAKYDRSLEVLRYLKEKGINRTKSGIMLGLGETEEEVYQTMRDLRDANVDVVTIGQYLQPTKKHLPVKEFITPELFAKYEKYGIELGFRHVESGPLVRSSYKAQKHIL</sequence>
<organism>
    <name type="scientific">Flavobacterium johnsoniae (strain ATCC 17061 / DSM 2064 / JCM 8514 / BCRC 14874 / CCUG 350202 / NBRC 14942 / NCIMB 11054 / UW101)</name>
    <name type="common">Cytophaga johnsonae</name>
    <dbReference type="NCBI Taxonomy" id="376686"/>
    <lineage>
        <taxon>Bacteria</taxon>
        <taxon>Pseudomonadati</taxon>
        <taxon>Bacteroidota</taxon>
        <taxon>Flavobacteriia</taxon>
        <taxon>Flavobacteriales</taxon>
        <taxon>Flavobacteriaceae</taxon>
        <taxon>Flavobacterium</taxon>
    </lineage>
</organism>
<keyword id="KW-0004">4Fe-4S</keyword>
<keyword id="KW-0963">Cytoplasm</keyword>
<keyword id="KW-0408">Iron</keyword>
<keyword id="KW-0411">Iron-sulfur</keyword>
<keyword id="KW-0479">Metal-binding</keyword>
<keyword id="KW-0949">S-adenosyl-L-methionine</keyword>
<keyword id="KW-0808">Transferase</keyword>
<name>LIPA_FLAJ1</name>